<keyword id="KW-0004">4Fe-4S</keyword>
<keyword id="KW-0028">Amino-acid biosynthesis</keyword>
<keyword id="KW-0408">Iron</keyword>
<keyword id="KW-0411">Iron-sulfur</keyword>
<keyword id="KW-0413">Isomerase</keyword>
<keyword id="KW-0479">Metal-binding</keyword>
<keyword id="KW-1185">Reference proteome</keyword>
<keyword id="KW-0949">S-adenosyl-L-methionine</keyword>
<sequence>MIKKMATEDLDRFGEKIIEGFQLSDDDLRALLSLESEEELEKLYYVARKVRNHYFGNRVFLNCFIYFSTYCKNQCAFCYYNCKNEINRYRLSREEIKETCKALKGAGFHMIDLTMGEDPYYYEEPDRFVELVQMVKNELGLPIMISPGVMDNATLLKAREKGANFFALYQETYDQELYEKLRVGQSFKGRYNTRRFAKEQGYCIEDGILTGVGNDIESTIKSLRGMKSNDPDMVRVMTFLPQEGTPLERFKENSNLSELKIIAILRLIFPKCLIPASLDLEGIDGMVHRLNAGANIVTSILPSDSKLEGVANYDRDLEERDRDIKSVIKRLEGMGMEPAPQAEFETVLRC</sequence>
<dbReference type="EC" id="5.4.99.58" evidence="1"/>
<dbReference type="EMBL" id="AE010299">
    <property type="protein sequence ID" value="AAM03607.1"/>
    <property type="molecule type" value="Genomic_DNA"/>
</dbReference>
<dbReference type="RefSeq" id="WP_011020212.1">
    <property type="nucleotide sequence ID" value="NC_003552.1"/>
</dbReference>
<dbReference type="SMR" id="Q8TUB9"/>
<dbReference type="FunCoup" id="Q8TUB9">
    <property type="interactions" value="94"/>
</dbReference>
<dbReference type="STRING" id="188937.MA_0154"/>
<dbReference type="EnsemblBacteria" id="AAM03607">
    <property type="protein sequence ID" value="AAM03607"/>
    <property type="gene ID" value="MA_0154"/>
</dbReference>
<dbReference type="GeneID" id="1472046"/>
<dbReference type="KEGG" id="mac:MA_0154"/>
<dbReference type="HOGENOM" id="CLU_033172_0_0_2"/>
<dbReference type="InParanoid" id="Q8TUB9"/>
<dbReference type="OrthoDB" id="61910at2157"/>
<dbReference type="PhylomeDB" id="Q8TUB9"/>
<dbReference type="UniPathway" id="UPA01028"/>
<dbReference type="Proteomes" id="UP000002487">
    <property type="component" value="Chromosome"/>
</dbReference>
<dbReference type="GO" id="GO:0051539">
    <property type="term" value="F:4 iron, 4 sulfur cluster binding"/>
    <property type="evidence" value="ECO:0000250"/>
    <property type="project" value="UniProtKB"/>
</dbReference>
<dbReference type="GO" id="GO:0016853">
    <property type="term" value="F:isomerase activity"/>
    <property type="evidence" value="ECO:0007669"/>
    <property type="project" value="UniProtKB-KW"/>
</dbReference>
<dbReference type="GO" id="GO:0046872">
    <property type="term" value="F:metal ion binding"/>
    <property type="evidence" value="ECO:0007669"/>
    <property type="project" value="UniProtKB-KW"/>
</dbReference>
<dbReference type="GO" id="GO:0016740">
    <property type="term" value="F:transferase activity"/>
    <property type="evidence" value="ECO:0000318"/>
    <property type="project" value="GO_Central"/>
</dbReference>
<dbReference type="GO" id="GO:0016765">
    <property type="term" value="F:transferase activity, transferring alkyl or aryl (other than methyl) groups"/>
    <property type="evidence" value="ECO:0000314"/>
    <property type="project" value="UniProtKB"/>
</dbReference>
<dbReference type="GO" id="GO:0071524">
    <property type="term" value="P:pyrrolysine biosynthetic process"/>
    <property type="evidence" value="ECO:0000315"/>
    <property type="project" value="UniProtKB"/>
</dbReference>
<dbReference type="CDD" id="cd01335">
    <property type="entry name" value="Radical_SAM"/>
    <property type="match status" value="1"/>
</dbReference>
<dbReference type="Gene3D" id="3.20.20.70">
    <property type="entry name" value="Aldolase class I"/>
    <property type="match status" value="1"/>
</dbReference>
<dbReference type="InterPro" id="IPR013785">
    <property type="entry name" value="Aldolase_TIM"/>
</dbReference>
<dbReference type="InterPro" id="IPR006638">
    <property type="entry name" value="Elp3/MiaA/NifB-like_rSAM"/>
</dbReference>
<dbReference type="InterPro" id="IPR034422">
    <property type="entry name" value="HydE/PylB-like"/>
</dbReference>
<dbReference type="InterPro" id="IPR023891">
    <property type="entry name" value="Pyrrolys_PylB"/>
</dbReference>
<dbReference type="InterPro" id="IPR007197">
    <property type="entry name" value="rSAM"/>
</dbReference>
<dbReference type="NCBIfam" id="TIGR03910">
    <property type="entry name" value="pyrrolys_PylB"/>
    <property type="match status" value="1"/>
</dbReference>
<dbReference type="PANTHER" id="PTHR43726">
    <property type="entry name" value="3-METHYLORNITHINE SYNTHASE"/>
    <property type="match status" value="1"/>
</dbReference>
<dbReference type="PANTHER" id="PTHR43726:SF1">
    <property type="entry name" value="BIOTIN SYNTHASE"/>
    <property type="match status" value="1"/>
</dbReference>
<dbReference type="Pfam" id="PF04055">
    <property type="entry name" value="Radical_SAM"/>
    <property type="match status" value="1"/>
</dbReference>
<dbReference type="PIRSF" id="PIRSF004762">
    <property type="entry name" value="CHP00423"/>
    <property type="match status" value="1"/>
</dbReference>
<dbReference type="SFLD" id="SFLDF00349">
    <property type="entry name" value="3-methylornithine_synthase_(Py"/>
    <property type="match status" value="1"/>
</dbReference>
<dbReference type="SFLD" id="SFLDG01280">
    <property type="entry name" value="HydE/PylB-like"/>
    <property type="match status" value="1"/>
</dbReference>
<dbReference type="SMART" id="SM00729">
    <property type="entry name" value="Elp3"/>
    <property type="match status" value="1"/>
</dbReference>
<dbReference type="SUPFAM" id="SSF102114">
    <property type="entry name" value="Radical SAM enzymes"/>
    <property type="match status" value="1"/>
</dbReference>
<dbReference type="PROSITE" id="PS51918">
    <property type="entry name" value="RADICAL_SAM"/>
    <property type="match status" value="1"/>
</dbReference>
<name>PYLB_METAC</name>
<feature type="chain" id="PRO_0000420350" description="3-methylornithine synthase">
    <location>
        <begin position="1"/>
        <end position="350"/>
    </location>
</feature>
<feature type="domain" description="Radical SAM core" evidence="2">
    <location>
        <begin position="57"/>
        <end position="279"/>
    </location>
</feature>
<feature type="binding site" evidence="1">
    <location>
        <position position="71"/>
    </location>
    <ligand>
        <name>[4Fe-4S] cluster</name>
        <dbReference type="ChEBI" id="CHEBI:49883"/>
        <note>4Fe-4S-S-AdoMet</note>
    </ligand>
</feature>
<feature type="binding site" evidence="1">
    <location>
        <position position="75"/>
    </location>
    <ligand>
        <name>[4Fe-4S] cluster</name>
        <dbReference type="ChEBI" id="CHEBI:49883"/>
        <note>4Fe-4S-S-AdoMet</note>
    </ligand>
</feature>
<feature type="binding site" evidence="1">
    <location>
        <position position="77"/>
    </location>
    <ligand>
        <name>S-adenosyl-L-methionine</name>
        <dbReference type="ChEBI" id="CHEBI:59789"/>
    </ligand>
</feature>
<feature type="binding site" evidence="1">
    <location>
        <position position="78"/>
    </location>
    <ligand>
        <name>[4Fe-4S] cluster</name>
        <dbReference type="ChEBI" id="CHEBI:49883"/>
        <note>4Fe-4S-S-AdoMet</note>
    </ligand>
</feature>
<feature type="binding site" evidence="1">
    <location>
        <position position="112"/>
    </location>
    <ligand>
        <name>(3R)-3-methyl-D-ornithine</name>
        <dbReference type="ChEBI" id="CHEBI:64642"/>
    </ligand>
</feature>
<feature type="binding site" evidence="1">
    <location>
        <position position="146"/>
    </location>
    <ligand>
        <name>(3R)-3-methyl-D-ornithine</name>
        <dbReference type="ChEBI" id="CHEBI:64642"/>
    </ligand>
</feature>
<feature type="binding site" evidence="1">
    <location>
        <position position="169"/>
    </location>
    <ligand>
        <name>(3R)-3-methyl-D-ornithine</name>
        <dbReference type="ChEBI" id="CHEBI:64642"/>
    </ligand>
</feature>
<feature type="binding site" evidence="1">
    <location>
        <position position="171"/>
    </location>
    <ligand>
        <name>S-adenosyl-L-methionine</name>
        <dbReference type="ChEBI" id="CHEBI:59789"/>
    </ligand>
</feature>
<feature type="binding site" evidence="1">
    <location>
        <position position="182"/>
    </location>
    <ligand>
        <name>S-adenosyl-L-methionine</name>
        <dbReference type="ChEBI" id="CHEBI:59789"/>
    </ligand>
</feature>
<feature type="binding site" evidence="1">
    <location>
        <position position="190"/>
    </location>
    <ligand>
        <name>S-adenosyl-L-methionine</name>
        <dbReference type="ChEBI" id="CHEBI:59789"/>
    </ligand>
</feature>
<feature type="binding site" evidence="1">
    <location>
        <position position="235"/>
    </location>
    <ligand>
        <name>(3R)-3-methyl-D-ornithine</name>
        <dbReference type="ChEBI" id="CHEBI:64642"/>
    </ligand>
</feature>
<feature type="binding site" evidence="1">
    <location>
        <position position="240"/>
    </location>
    <ligand>
        <name>S-adenosyl-L-methionine</name>
        <dbReference type="ChEBI" id="CHEBI:59789"/>
    </ligand>
</feature>
<feature type="binding site" evidence="1">
    <location>
        <position position="242"/>
    </location>
    <ligand>
        <name>S-adenosyl-L-methionine</name>
        <dbReference type="ChEBI" id="CHEBI:59789"/>
    </ligand>
</feature>
<feature type="binding site" evidence="1">
    <location>
        <position position="277"/>
    </location>
    <ligand>
        <name>(3R)-3-methyl-D-ornithine</name>
        <dbReference type="ChEBI" id="CHEBI:64642"/>
    </ligand>
</feature>
<feature type="binding site" evidence="1">
    <location>
        <position position="298"/>
    </location>
    <ligand>
        <name>(3R)-3-methyl-D-ornithine</name>
        <dbReference type="ChEBI" id="CHEBI:64642"/>
    </ligand>
</feature>
<feature type="binding site" evidence="1">
    <location>
        <position position="299"/>
    </location>
    <ligand>
        <name>(3R)-3-methyl-D-ornithine</name>
        <dbReference type="ChEBI" id="CHEBI:64642"/>
    </ligand>
</feature>
<gene>
    <name type="primary">pylB</name>
    <name type="ordered locus">MA_0154</name>
</gene>
<reference key="1">
    <citation type="journal article" date="2002" name="Genome Res.">
        <title>The genome of Methanosarcina acetivorans reveals extensive metabolic and physiological diversity.</title>
        <authorList>
            <person name="Galagan J.E."/>
            <person name="Nusbaum C."/>
            <person name="Roy A."/>
            <person name="Endrizzi M.G."/>
            <person name="Macdonald P."/>
            <person name="FitzHugh W."/>
            <person name="Calvo S."/>
            <person name="Engels R."/>
            <person name="Smirnov S."/>
            <person name="Atnoor D."/>
            <person name="Brown A."/>
            <person name="Allen N."/>
            <person name="Naylor J."/>
            <person name="Stange-Thomann N."/>
            <person name="DeArellano K."/>
            <person name="Johnson R."/>
            <person name="Linton L."/>
            <person name="McEwan P."/>
            <person name="McKernan K."/>
            <person name="Talamas J."/>
            <person name="Tirrell A."/>
            <person name="Ye W."/>
            <person name="Zimmer A."/>
            <person name="Barber R.D."/>
            <person name="Cann I."/>
            <person name="Graham D.E."/>
            <person name="Grahame D.A."/>
            <person name="Guss A.M."/>
            <person name="Hedderich R."/>
            <person name="Ingram-Smith C."/>
            <person name="Kuettner H.C."/>
            <person name="Krzycki J.A."/>
            <person name="Leigh J.A."/>
            <person name="Li W."/>
            <person name="Liu J."/>
            <person name="Mukhopadhyay B."/>
            <person name="Reeve J.N."/>
            <person name="Smith K."/>
            <person name="Springer T.A."/>
            <person name="Umayam L.A."/>
            <person name="White O."/>
            <person name="White R.H."/>
            <person name="de Macario E.C."/>
            <person name="Ferry J.G."/>
            <person name="Jarrell K.F."/>
            <person name="Jing H."/>
            <person name="Macario A.J.L."/>
            <person name="Paulsen I.T."/>
            <person name="Pritchett M."/>
            <person name="Sowers K.R."/>
            <person name="Swanson R.V."/>
            <person name="Zinder S.H."/>
            <person name="Lander E."/>
            <person name="Metcalf W.W."/>
            <person name="Birren B."/>
        </authorList>
    </citation>
    <scope>NUCLEOTIDE SEQUENCE [LARGE SCALE GENOMIC DNA]</scope>
    <source>
        <strain>ATCC 35395 / DSM 2834 / JCM 12185 / C2A</strain>
    </source>
</reference>
<reference key="2">
    <citation type="journal article" date="2007" name="Proc. Natl. Acad. Sci. U.S.A.">
        <title>A natural genetic code expansion cassette enables transmissible biosynthesis and genetic encoding of pyrrolysine.</title>
        <authorList>
            <person name="Longstaff D.G."/>
            <person name="Larue R.C."/>
            <person name="Faust J.E."/>
            <person name="Mahapatra A."/>
            <person name="Zhang L."/>
            <person name="Green-Church K.B."/>
            <person name="Krzycki J.A."/>
        </authorList>
    </citation>
    <scope>FUNCTION IN PYRROLYSINE BIOSYNTHESIS</scope>
    <scope>GENE NAME</scope>
    <scope>DISRUPTION PHENOTYPE</scope>
    <source>
        <strain>ATCC 35395 / DSM 2834 / JCM 12185 / C2A</strain>
    </source>
</reference>
<reference key="3">
    <citation type="journal article" date="2011" name="Nature">
        <title>The complete biosynthesis of the genetically encoded amino acid pyrrolysine from lysine.</title>
        <authorList>
            <person name="Gaston M.A."/>
            <person name="Zhang L."/>
            <person name="Green-Church K.B."/>
            <person name="Krzycki J.A."/>
        </authorList>
    </citation>
    <scope>FUNCTION</scope>
    <scope>PATHWAY</scope>
    <source>
        <strain>ATCC 35395 / DSM 2834 / JCM 12185 / C2A</strain>
    </source>
</reference>
<comment type="function">
    <text evidence="3 4 5">Catalyzes the isomerization of L-lysine to (3R)-3-methyl-D-ornithine via a radical-based mechanism (Probable). Is required for the biosynthesis of pyrrolysine.</text>
</comment>
<comment type="catalytic activity">
    <reaction evidence="1">
        <text>L-lysine = (3R)-3-methyl-D-ornithine</text>
        <dbReference type="Rhea" id="RHEA:32759"/>
        <dbReference type="ChEBI" id="CHEBI:32551"/>
        <dbReference type="ChEBI" id="CHEBI:64642"/>
        <dbReference type="EC" id="5.4.99.58"/>
    </reaction>
    <physiologicalReaction direction="left-to-right" evidence="1">
        <dbReference type="Rhea" id="RHEA:32760"/>
    </physiologicalReaction>
</comment>
<comment type="cofactor">
    <cofactor evidence="1">
        <name>[4Fe-4S] cluster</name>
        <dbReference type="ChEBI" id="CHEBI:49883"/>
    </cofactor>
    <text evidence="1">Binds 1 [4Fe-4S] cluster. The cluster is coordinated with 3 cysteines and an exchangeable S-adenosyl-L-methionine.</text>
</comment>
<comment type="cofactor">
    <cofactor evidence="1">
        <name>S-adenosyl-L-methionine</name>
        <dbReference type="ChEBI" id="CHEBI:59789"/>
    </cofactor>
    <text evidence="1">Binds 1 S-adenosyl-L-methionine per subunit.</text>
</comment>
<comment type="pathway">
    <text evidence="4">Amino-acid biosynthesis; L-pyrrolysine biosynthesis.</text>
</comment>
<comment type="disruption phenotype">
    <text evidence="3">Cells lacking this gene are unable to translate UAG as pyrrolysine, and do not produce pyrrolysine.</text>
</comment>
<comment type="similarity">
    <text evidence="5">Belongs to the radical SAM superfamily. PylB family.</text>
</comment>
<organism>
    <name type="scientific">Methanosarcina acetivorans (strain ATCC 35395 / DSM 2834 / JCM 12185 / C2A)</name>
    <dbReference type="NCBI Taxonomy" id="188937"/>
    <lineage>
        <taxon>Archaea</taxon>
        <taxon>Methanobacteriati</taxon>
        <taxon>Methanobacteriota</taxon>
        <taxon>Stenosarchaea group</taxon>
        <taxon>Methanomicrobia</taxon>
        <taxon>Methanosarcinales</taxon>
        <taxon>Methanosarcinaceae</taxon>
        <taxon>Methanosarcina</taxon>
    </lineage>
</organism>
<proteinExistence type="evidence at protein level"/>
<evidence type="ECO:0000250" key="1">
    <source>
        <dbReference type="UniProtKB" id="Q46E78"/>
    </source>
</evidence>
<evidence type="ECO:0000255" key="2">
    <source>
        <dbReference type="PROSITE-ProRule" id="PRU01266"/>
    </source>
</evidence>
<evidence type="ECO:0000269" key="3">
    <source>
    </source>
</evidence>
<evidence type="ECO:0000269" key="4">
    <source>
    </source>
</evidence>
<evidence type="ECO:0000305" key="5"/>
<protein>
    <recommendedName>
        <fullName>3-methylornithine synthase</fullName>
        <ecNumber evidence="1">5.4.99.58</ecNumber>
    </recommendedName>
    <alternativeName>
        <fullName>(2R,3R)-3-methylornithine synthase</fullName>
    </alternativeName>
    <alternativeName>
        <fullName>(3R)-3-methyl-D-ornithine synthase</fullName>
    </alternativeName>
    <alternativeName>
        <fullName>Pyrrolysine biosynthesis protein PylB</fullName>
    </alternativeName>
</protein>
<accession>Q8TUB9</accession>